<protein>
    <recommendedName>
        <fullName evidence="1">2,3-bisphosphoglycerate-dependent phosphoglycerate mutase</fullName>
        <shortName evidence="1">BPG-dependent PGAM</shortName>
        <shortName evidence="1">PGAM</shortName>
        <shortName evidence="1">Phosphoglyceromutase</shortName>
        <shortName evidence="1">dPGM</shortName>
        <ecNumber evidence="1">5.4.2.11</ecNumber>
    </recommendedName>
</protein>
<proteinExistence type="inferred from homology"/>
<accession>A7FKP6</accession>
<name>GPMA_YERP3</name>
<evidence type="ECO:0000255" key="1">
    <source>
        <dbReference type="HAMAP-Rule" id="MF_01039"/>
    </source>
</evidence>
<gene>
    <name evidence="1" type="primary">gpmA</name>
    <name type="ordered locus">YpsIP31758_2861</name>
</gene>
<dbReference type="EC" id="5.4.2.11" evidence="1"/>
<dbReference type="EMBL" id="CP000720">
    <property type="protein sequence ID" value="ABS49731.1"/>
    <property type="molecule type" value="Genomic_DNA"/>
</dbReference>
<dbReference type="RefSeq" id="WP_002210746.1">
    <property type="nucleotide sequence ID" value="NC_009708.1"/>
</dbReference>
<dbReference type="SMR" id="A7FKP6"/>
<dbReference type="GeneID" id="57977273"/>
<dbReference type="KEGG" id="ypi:YpsIP31758_2861"/>
<dbReference type="HOGENOM" id="CLU_033323_1_1_6"/>
<dbReference type="UniPathway" id="UPA00109">
    <property type="reaction ID" value="UER00186"/>
</dbReference>
<dbReference type="Proteomes" id="UP000002412">
    <property type="component" value="Chromosome"/>
</dbReference>
<dbReference type="GO" id="GO:0004619">
    <property type="term" value="F:phosphoglycerate mutase activity"/>
    <property type="evidence" value="ECO:0007669"/>
    <property type="project" value="UniProtKB-EC"/>
</dbReference>
<dbReference type="GO" id="GO:0006094">
    <property type="term" value="P:gluconeogenesis"/>
    <property type="evidence" value="ECO:0007669"/>
    <property type="project" value="UniProtKB-UniRule"/>
</dbReference>
<dbReference type="GO" id="GO:0006096">
    <property type="term" value="P:glycolytic process"/>
    <property type="evidence" value="ECO:0007669"/>
    <property type="project" value="UniProtKB-UniRule"/>
</dbReference>
<dbReference type="CDD" id="cd07067">
    <property type="entry name" value="HP_PGM_like"/>
    <property type="match status" value="1"/>
</dbReference>
<dbReference type="FunFam" id="3.40.50.1240:FF:000003">
    <property type="entry name" value="2,3-bisphosphoglycerate-dependent phosphoglycerate mutase"/>
    <property type="match status" value="1"/>
</dbReference>
<dbReference type="Gene3D" id="3.40.50.1240">
    <property type="entry name" value="Phosphoglycerate mutase-like"/>
    <property type="match status" value="1"/>
</dbReference>
<dbReference type="HAMAP" id="MF_01039">
    <property type="entry name" value="PGAM_GpmA"/>
    <property type="match status" value="1"/>
</dbReference>
<dbReference type="InterPro" id="IPR013078">
    <property type="entry name" value="His_Pase_superF_clade-1"/>
</dbReference>
<dbReference type="InterPro" id="IPR029033">
    <property type="entry name" value="His_PPase_superfam"/>
</dbReference>
<dbReference type="InterPro" id="IPR001345">
    <property type="entry name" value="PG/BPGM_mutase_AS"/>
</dbReference>
<dbReference type="InterPro" id="IPR005952">
    <property type="entry name" value="Phosphogly_mut1"/>
</dbReference>
<dbReference type="NCBIfam" id="TIGR01258">
    <property type="entry name" value="pgm_1"/>
    <property type="match status" value="1"/>
</dbReference>
<dbReference type="NCBIfam" id="NF010713">
    <property type="entry name" value="PRK14115.1"/>
    <property type="match status" value="1"/>
</dbReference>
<dbReference type="PANTHER" id="PTHR11931">
    <property type="entry name" value="PHOSPHOGLYCERATE MUTASE"/>
    <property type="match status" value="1"/>
</dbReference>
<dbReference type="Pfam" id="PF00300">
    <property type="entry name" value="His_Phos_1"/>
    <property type="match status" value="1"/>
</dbReference>
<dbReference type="PIRSF" id="PIRSF000709">
    <property type="entry name" value="6PFK_2-Ptase"/>
    <property type="match status" value="1"/>
</dbReference>
<dbReference type="SMART" id="SM00855">
    <property type="entry name" value="PGAM"/>
    <property type="match status" value="1"/>
</dbReference>
<dbReference type="SUPFAM" id="SSF53254">
    <property type="entry name" value="Phosphoglycerate mutase-like"/>
    <property type="match status" value="1"/>
</dbReference>
<dbReference type="PROSITE" id="PS00175">
    <property type="entry name" value="PG_MUTASE"/>
    <property type="match status" value="1"/>
</dbReference>
<sequence length="250" mass="28358">MAVTKLVLVRHGESQWNNENRFTGWYDVDLSEKGRSEAKAAGKLLKDEGFTFDFAYTSVLKRAIHTLWNILDELDQAWLPTEKTWKLNERHYGALQGLNKSETAEKYGDEQVKQWRRGFAITPPALEKSDERFPGHDPRYAKLTDAELPTTESLALTIERVIPYWNDVIKPRIASGERVIIAAHGNSLRALVKYLDDLGEDEILELNIPTGVPLVYEFDENFKPIKHYYLGNADEIAAKAAAVANQGKAK</sequence>
<comment type="function">
    <text evidence="1">Catalyzes the interconversion of 2-phosphoglycerate and 3-phosphoglycerate.</text>
</comment>
<comment type="catalytic activity">
    <reaction evidence="1">
        <text>(2R)-2-phosphoglycerate = (2R)-3-phosphoglycerate</text>
        <dbReference type="Rhea" id="RHEA:15901"/>
        <dbReference type="ChEBI" id="CHEBI:58272"/>
        <dbReference type="ChEBI" id="CHEBI:58289"/>
        <dbReference type="EC" id="5.4.2.11"/>
    </reaction>
</comment>
<comment type="pathway">
    <text evidence="1">Carbohydrate degradation; glycolysis; pyruvate from D-glyceraldehyde 3-phosphate: step 3/5.</text>
</comment>
<comment type="subunit">
    <text evidence="1">Homodimer.</text>
</comment>
<comment type="similarity">
    <text evidence="1">Belongs to the phosphoglycerate mutase family. BPG-dependent PGAM subfamily.</text>
</comment>
<reference key="1">
    <citation type="journal article" date="2007" name="PLoS Genet.">
        <title>The complete genome sequence of Yersinia pseudotuberculosis IP31758, the causative agent of Far East scarlet-like fever.</title>
        <authorList>
            <person name="Eppinger M."/>
            <person name="Rosovitz M.J."/>
            <person name="Fricke W.F."/>
            <person name="Rasko D.A."/>
            <person name="Kokorina G."/>
            <person name="Fayolle C."/>
            <person name="Lindler L.E."/>
            <person name="Carniel E."/>
            <person name="Ravel J."/>
        </authorList>
    </citation>
    <scope>NUCLEOTIDE SEQUENCE [LARGE SCALE GENOMIC DNA]</scope>
    <source>
        <strain>IP 31758</strain>
    </source>
</reference>
<organism>
    <name type="scientific">Yersinia pseudotuberculosis serotype O:1b (strain IP 31758)</name>
    <dbReference type="NCBI Taxonomy" id="349747"/>
    <lineage>
        <taxon>Bacteria</taxon>
        <taxon>Pseudomonadati</taxon>
        <taxon>Pseudomonadota</taxon>
        <taxon>Gammaproteobacteria</taxon>
        <taxon>Enterobacterales</taxon>
        <taxon>Yersiniaceae</taxon>
        <taxon>Yersinia</taxon>
    </lineage>
</organism>
<keyword id="KW-0312">Gluconeogenesis</keyword>
<keyword id="KW-0324">Glycolysis</keyword>
<keyword id="KW-0413">Isomerase</keyword>
<feature type="chain" id="PRO_1000064115" description="2,3-bisphosphoglycerate-dependent phosphoglycerate mutase">
    <location>
        <begin position="1"/>
        <end position="250"/>
    </location>
</feature>
<feature type="active site" description="Tele-phosphohistidine intermediate" evidence="1">
    <location>
        <position position="11"/>
    </location>
</feature>
<feature type="active site" description="Proton donor/acceptor" evidence="1">
    <location>
        <position position="89"/>
    </location>
</feature>
<feature type="binding site" evidence="1">
    <location>
        <begin position="10"/>
        <end position="17"/>
    </location>
    <ligand>
        <name>substrate</name>
    </ligand>
</feature>
<feature type="binding site" evidence="1">
    <location>
        <begin position="23"/>
        <end position="24"/>
    </location>
    <ligand>
        <name>substrate</name>
    </ligand>
</feature>
<feature type="binding site" evidence="1">
    <location>
        <position position="62"/>
    </location>
    <ligand>
        <name>substrate</name>
    </ligand>
</feature>
<feature type="binding site" evidence="1">
    <location>
        <begin position="89"/>
        <end position="92"/>
    </location>
    <ligand>
        <name>substrate</name>
    </ligand>
</feature>
<feature type="binding site" evidence="1">
    <location>
        <position position="100"/>
    </location>
    <ligand>
        <name>substrate</name>
    </ligand>
</feature>
<feature type="binding site" evidence="1">
    <location>
        <begin position="116"/>
        <end position="117"/>
    </location>
    <ligand>
        <name>substrate</name>
    </ligand>
</feature>
<feature type="binding site" evidence="1">
    <location>
        <begin position="185"/>
        <end position="186"/>
    </location>
    <ligand>
        <name>substrate</name>
    </ligand>
</feature>
<feature type="site" description="Transition state stabilizer" evidence="1">
    <location>
        <position position="184"/>
    </location>
</feature>